<comment type="subunit">
    <text evidence="1">Forms oligomers.</text>
</comment>
<comment type="subcellular location">
    <subcellularLocation>
        <location evidence="1">Cytoplasm</location>
        <location evidence="1">Nucleoid</location>
    </subcellularLocation>
</comment>
<comment type="similarity">
    <text evidence="1">Belongs to the MraZ family.</text>
</comment>
<gene>
    <name evidence="1" type="primary">mraZ</name>
    <name type="ordered locus">BH2576</name>
</gene>
<organism>
    <name type="scientific">Halalkalibacterium halodurans (strain ATCC BAA-125 / DSM 18197 / FERM 7344 / JCM 9153 / C-125)</name>
    <name type="common">Bacillus halodurans</name>
    <dbReference type="NCBI Taxonomy" id="272558"/>
    <lineage>
        <taxon>Bacteria</taxon>
        <taxon>Bacillati</taxon>
        <taxon>Bacillota</taxon>
        <taxon>Bacilli</taxon>
        <taxon>Bacillales</taxon>
        <taxon>Bacillaceae</taxon>
        <taxon>Halalkalibacterium (ex Joshi et al. 2022)</taxon>
    </lineage>
</organism>
<evidence type="ECO:0000255" key="1">
    <source>
        <dbReference type="HAMAP-Rule" id="MF_01008"/>
    </source>
</evidence>
<evidence type="ECO:0000255" key="2">
    <source>
        <dbReference type="PROSITE-ProRule" id="PRU01076"/>
    </source>
</evidence>
<name>MRAZ_HALH5</name>
<protein>
    <recommendedName>
        <fullName>Transcriptional regulator MraZ</fullName>
    </recommendedName>
</protein>
<accession>Q9K9R9</accession>
<proteinExistence type="inferred from homology"/>
<sequence length="143" mass="16834">MFMGEYRHNVDEKGRMIIPAKFREELGETFVVTRGLDRCLFVYPQVEWKKLEESLKNLPFTKKDARAFTRFFFSGATECELDKQGRVNIASPLREFAQLKKECVVIGVSNRVEIWSKELWEEYFAESEESFSEIAENIVDFDL</sequence>
<dbReference type="EMBL" id="BA000004">
    <property type="protein sequence ID" value="BAB06295.1"/>
    <property type="molecule type" value="Genomic_DNA"/>
</dbReference>
<dbReference type="PIR" id="H83971">
    <property type="entry name" value="H83971"/>
</dbReference>
<dbReference type="RefSeq" id="WP_010898727.1">
    <property type="nucleotide sequence ID" value="NC_002570.2"/>
</dbReference>
<dbReference type="SMR" id="Q9K9R9"/>
<dbReference type="STRING" id="272558.gene:10728474"/>
<dbReference type="KEGG" id="bha:BH2576"/>
<dbReference type="eggNOG" id="COG2001">
    <property type="taxonomic scope" value="Bacteria"/>
</dbReference>
<dbReference type="HOGENOM" id="CLU_107907_0_5_9"/>
<dbReference type="OrthoDB" id="9807753at2"/>
<dbReference type="Proteomes" id="UP000001258">
    <property type="component" value="Chromosome"/>
</dbReference>
<dbReference type="GO" id="GO:0005737">
    <property type="term" value="C:cytoplasm"/>
    <property type="evidence" value="ECO:0007669"/>
    <property type="project" value="UniProtKB-UniRule"/>
</dbReference>
<dbReference type="GO" id="GO:0009295">
    <property type="term" value="C:nucleoid"/>
    <property type="evidence" value="ECO:0007669"/>
    <property type="project" value="UniProtKB-SubCell"/>
</dbReference>
<dbReference type="GO" id="GO:0003700">
    <property type="term" value="F:DNA-binding transcription factor activity"/>
    <property type="evidence" value="ECO:0007669"/>
    <property type="project" value="UniProtKB-UniRule"/>
</dbReference>
<dbReference type="GO" id="GO:0000976">
    <property type="term" value="F:transcription cis-regulatory region binding"/>
    <property type="evidence" value="ECO:0007669"/>
    <property type="project" value="TreeGrafter"/>
</dbReference>
<dbReference type="GO" id="GO:2000143">
    <property type="term" value="P:negative regulation of DNA-templated transcription initiation"/>
    <property type="evidence" value="ECO:0007669"/>
    <property type="project" value="TreeGrafter"/>
</dbReference>
<dbReference type="CDD" id="cd16321">
    <property type="entry name" value="MraZ_C"/>
    <property type="match status" value="1"/>
</dbReference>
<dbReference type="CDD" id="cd16320">
    <property type="entry name" value="MraZ_N"/>
    <property type="match status" value="1"/>
</dbReference>
<dbReference type="FunFam" id="3.40.1550.20:FF:000002">
    <property type="entry name" value="Transcriptional regulator MraZ"/>
    <property type="match status" value="1"/>
</dbReference>
<dbReference type="Gene3D" id="3.40.1550.20">
    <property type="entry name" value="Transcriptional regulator MraZ domain"/>
    <property type="match status" value="1"/>
</dbReference>
<dbReference type="HAMAP" id="MF_01008">
    <property type="entry name" value="MraZ"/>
    <property type="match status" value="1"/>
</dbReference>
<dbReference type="InterPro" id="IPR003444">
    <property type="entry name" value="MraZ"/>
</dbReference>
<dbReference type="InterPro" id="IPR035644">
    <property type="entry name" value="MraZ_C"/>
</dbReference>
<dbReference type="InterPro" id="IPR020603">
    <property type="entry name" value="MraZ_dom"/>
</dbReference>
<dbReference type="InterPro" id="IPR035642">
    <property type="entry name" value="MraZ_N"/>
</dbReference>
<dbReference type="InterPro" id="IPR038619">
    <property type="entry name" value="MraZ_sf"/>
</dbReference>
<dbReference type="InterPro" id="IPR007159">
    <property type="entry name" value="SpoVT-AbrB_dom"/>
</dbReference>
<dbReference type="InterPro" id="IPR037914">
    <property type="entry name" value="SpoVT-AbrB_sf"/>
</dbReference>
<dbReference type="NCBIfam" id="TIGR00242">
    <property type="entry name" value="division/cell wall cluster transcriptional repressor MraZ"/>
    <property type="match status" value="1"/>
</dbReference>
<dbReference type="PANTHER" id="PTHR34701">
    <property type="entry name" value="TRANSCRIPTIONAL REGULATOR MRAZ"/>
    <property type="match status" value="1"/>
</dbReference>
<dbReference type="PANTHER" id="PTHR34701:SF1">
    <property type="entry name" value="TRANSCRIPTIONAL REGULATOR MRAZ"/>
    <property type="match status" value="1"/>
</dbReference>
<dbReference type="Pfam" id="PF02381">
    <property type="entry name" value="MraZ"/>
    <property type="match status" value="2"/>
</dbReference>
<dbReference type="SUPFAM" id="SSF89447">
    <property type="entry name" value="AbrB/MazE/MraZ-like"/>
    <property type="match status" value="1"/>
</dbReference>
<dbReference type="PROSITE" id="PS51740">
    <property type="entry name" value="SPOVT_ABRB"/>
    <property type="match status" value="2"/>
</dbReference>
<reference key="1">
    <citation type="journal article" date="2000" name="Nucleic Acids Res.">
        <title>Complete genome sequence of the alkaliphilic bacterium Bacillus halodurans and genomic sequence comparison with Bacillus subtilis.</title>
        <authorList>
            <person name="Takami H."/>
            <person name="Nakasone K."/>
            <person name="Takaki Y."/>
            <person name="Maeno G."/>
            <person name="Sasaki R."/>
            <person name="Masui N."/>
            <person name="Fuji F."/>
            <person name="Hirama C."/>
            <person name="Nakamura Y."/>
            <person name="Ogasawara N."/>
            <person name="Kuhara S."/>
            <person name="Horikoshi K."/>
        </authorList>
    </citation>
    <scope>NUCLEOTIDE SEQUENCE [LARGE SCALE GENOMIC DNA]</scope>
    <source>
        <strain>ATCC BAA-125 / DSM 18197 / FERM 7344 / JCM 9153 / C-125</strain>
    </source>
</reference>
<keyword id="KW-0963">Cytoplasm</keyword>
<keyword id="KW-0238">DNA-binding</keyword>
<keyword id="KW-1185">Reference proteome</keyword>
<keyword id="KW-0677">Repeat</keyword>
<keyword id="KW-0804">Transcription</keyword>
<keyword id="KW-0805">Transcription regulation</keyword>
<feature type="chain" id="PRO_0000108456" description="Transcriptional regulator MraZ">
    <location>
        <begin position="1"/>
        <end position="143"/>
    </location>
</feature>
<feature type="domain" description="SpoVT-AbrB 1" evidence="2">
    <location>
        <begin position="5"/>
        <end position="47"/>
    </location>
</feature>
<feature type="domain" description="SpoVT-AbrB 2" evidence="2">
    <location>
        <begin position="76"/>
        <end position="119"/>
    </location>
</feature>